<dbReference type="EMBL" id="Z12171">
    <property type="protein sequence ID" value="CAA78162.1"/>
    <property type="molecule type" value="mRNA"/>
</dbReference>
<dbReference type="EMBL" id="U15980">
    <property type="protein sequence ID" value="AAB60495.1"/>
    <property type="molecule type" value="mRNA"/>
</dbReference>
<dbReference type="EMBL" id="L12721">
    <property type="protein sequence ID" value="AAA37175.1"/>
    <property type="molecule type" value="mRNA"/>
</dbReference>
<dbReference type="EMBL" id="S71340">
    <property type="status" value="NOT_ANNOTATED_CDS"/>
    <property type="molecule type" value="Genomic_DNA"/>
</dbReference>
<dbReference type="EMBL" id="D16847">
    <property type="protein sequence ID" value="BAA04121.1"/>
    <property type="molecule type" value="mRNA"/>
</dbReference>
<dbReference type="CCDS" id="CCDS26168.1">
    <molecule id="Q09163-1"/>
</dbReference>
<dbReference type="CCDS" id="CCDS49173.1">
    <molecule id="Q09163-6"/>
</dbReference>
<dbReference type="CCDS" id="CCDS49174.1">
    <molecule id="Q09163-2"/>
</dbReference>
<dbReference type="CCDS" id="CCDS56863.1">
    <molecule id="Q09163-3"/>
</dbReference>
<dbReference type="PIR" id="A54785">
    <property type="entry name" value="A54785"/>
</dbReference>
<dbReference type="PIR" id="S53718">
    <property type="entry name" value="S53718"/>
</dbReference>
<dbReference type="RefSeq" id="NP_034182.2">
    <property type="nucleotide sequence ID" value="NM_010052.5"/>
</dbReference>
<dbReference type="SMR" id="Q09163"/>
<dbReference type="BioGRID" id="199231">
    <property type="interactions" value="4"/>
</dbReference>
<dbReference type="DIP" id="DIP-6010N"/>
<dbReference type="FunCoup" id="Q09163">
    <property type="interactions" value="273"/>
</dbReference>
<dbReference type="IntAct" id="Q09163">
    <property type="interactions" value="1"/>
</dbReference>
<dbReference type="STRING" id="10090.ENSMUSP00000063104"/>
<dbReference type="GlyConnect" id="153">
    <property type="glycosylation" value="9 N-Linked glycans (1 site), 1 O-Fuc glycan (1 site), 1 O-Glc glycan (2 sites), 2 O-Linked glycans"/>
</dbReference>
<dbReference type="GlyCosmos" id="Q09163">
    <property type="glycosylation" value="10 sites, 24 glycans"/>
</dbReference>
<dbReference type="GlyGen" id="Q09163">
    <property type="glycosylation" value="11 sites, 19 N-linked glycans (3 sites), 4 O-linked glycans (7 sites)"/>
</dbReference>
<dbReference type="iPTMnet" id="Q09163"/>
<dbReference type="PhosphoSitePlus" id="Q09163"/>
<dbReference type="jPOST" id="Q09163"/>
<dbReference type="PaxDb" id="10090-ENSMUSP00000105470"/>
<dbReference type="ProteomicsDB" id="279427">
    <molecule id="Q09163-1"/>
</dbReference>
<dbReference type="ProteomicsDB" id="279428">
    <molecule id="Q09163-2"/>
</dbReference>
<dbReference type="ProteomicsDB" id="279429">
    <molecule id="Q09163-3"/>
</dbReference>
<dbReference type="ProteomicsDB" id="279430">
    <molecule id="Q09163-4"/>
</dbReference>
<dbReference type="ProteomicsDB" id="279431">
    <molecule id="Q09163-5"/>
</dbReference>
<dbReference type="ProteomicsDB" id="279432">
    <molecule id="Q09163-6"/>
</dbReference>
<dbReference type="Pumba" id="Q09163"/>
<dbReference type="DNASU" id="13386"/>
<dbReference type="GeneID" id="13386"/>
<dbReference type="KEGG" id="mmu:13386"/>
<dbReference type="AGR" id="MGI:94900"/>
<dbReference type="CTD" id="8788"/>
<dbReference type="MGI" id="MGI:94900">
    <property type="gene designation" value="Dlk1"/>
</dbReference>
<dbReference type="eggNOG" id="KOG1217">
    <property type="taxonomic scope" value="Eukaryota"/>
</dbReference>
<dbReference type="InParanoid" id="Q09163"/>
<dbReference type="OrthoDB" id="6130531at2759"/>
<dbReference type="PhylomeDB" id="Q09163"/>
<dbReference type="BioGRID-ORCS" id="13386">
    <property type="hits" value="1 hit in 78 CRISPR screens"/>
</dbReference>
<dbReference type="ChiTaRS" id="Dlk1">
    <property type="organism name" value="mouse"/>
</dbReference>
<dbReference type="PRO" id="PR:Q09163"/>
<dbReference type="Proteomes" id="UP000000589">
    <property type="component" value="Unplaced"/>
</dbReference>
<dbReference type="RNAct" id="Q09163">
    <property type="molecule type" value="protein"/>
</dbReference>
<dbReference type="GO" id="GO:0005737">
    <property type="term" value="C:cytoplasm"/>
    <property type="evidence" value="ECO:0007669"/>
    <property type="project" value="UniProtKB-SubCell"/>
</dbReference>
<dbReference type="GO" id="GO:0009897">
    <property type="term" value="C:external side of plasma membrane"/>
    <property type="evidence" value="ECO:0000314"/>
    <property type="project" value="MGI"/>
</dbReference>
<dbReference type="GO" id="GO:0005886">
    <property type="term" value="C:plasma membrane"/>
    <property type="evidence" value="ECO:0000304"/>
    <property type="project" value="Reactome"/>
</dbReference>
<dbReference type="GO" id="GO:0005509">
    <property type="term" value="F:calcium ion binding"/>
    <property type="evidence" value="ECO:0007669"/>
    <property type="project" value="InterPro"/>
</dbReference>
<dbReference type="GO" id="GO:0030282">
    <property type="term" value="P:bone mineralization"/>
    <property type="evidence" value="ECO:0000315"/>
    <property type="project" value="MGI"/>
</dbReference>
<dbReference type="GO" id="GO:0048706">
    <property type="term" value="P:embryonic skeletal system development"/>
    <property type="evidence" value="ECO:0000314"/>
    <property type="project" value="MGI"/>
</dbReference>
<dbReference type="GO" id="GO:0035264">
    <property type="term" value="P:multicellular organism growth"/>
    <property type="evidence" value="ECO:0000315"/>
    <property type="project" value="MGI"/>
</dbReference>
<dbReference type="GO" id="GO:0045599">
    <property type="term" value="P:negative regulation of fat cell differentiation"/>
    <property type="evidence" value="ECO:0000314"/>
    <property type="project" value="HGNC"/>
</dbReference>
<dbReference type="GO" id="GO:0045746">
    <property type="term" value="P:negative regulation of Notch signaling pathway"/>
    <property type="evidence" value="ECO:0000316"/>
    <property type="project" value="MGI"/>
</dbReference>
<dbReference type="GO" id="GO:0030279">
    <property type="term" value="P:negative regulation of ossification"/>
    <property type="evidence" value="ECO:0000266"/>
    <property type="project" value="MGI"/>
</dbReference>
<dbReference type="GO" id="GO:0045668">
    <property type="term" value="P:negative regulation of osteoblast differentiation"/>
    <property type="evidence" value="ECO:0000266"/>
    <property type="project" value="MGI"/>
</dbReference>
<dbReference type="GO" id="GO:1905563">
    <property type="term" value="P:negative regulation of vascular endothelial cell proliferation"/>
    <property type="evidence" value="ECO:0000314"/>
    <property type="project" value="BHF-UCL"/>
</dbReference>
<dbReference type="GO" id="GO:0001503">
    <property type="term" value="P:ossification"/>
    <property type="evidence" value="ECO:0000315"/>
    <property type="project" value="MGI"/>
</dbReference>
<dbReference type="GO" id="GO:0001649">
    <property type="term" value="P:osteoblast differentiation"/>
    <property type="evidence" value="ECO:0000315"/>
    <property type="project" value="MGI"/>
</dbReference>
<dbReference type="GO" id="GO:0045780">
    <property type="term" value="P:positive regulation of bone resorption"/>
    <property type="evidence" value="ECO:0000315"/>
    <property type="project" value="MGI"/>
</dbReference>
<dbReference type="GO" id="GO:0001819">
    <property type="term" value="P:positive regulation of cytokine production"/>
    <property type="evidence" value="ECO:0000314"/>
    <property type="project" value="MGI"/>
</dbReference>
<dbReference type="GO" id="GO:0045672">
    <property type="term" value="P:positive regulation of osteoclast differentiation"/>
    <property type="evidence" value="ECO:0000266"/>
    <property type="project" value="MGI"/>
</dbReference>
<dbReference type="GO" id="GO:0009791">
    <property type="term" value="P:post-embryonic development"/>
    <property type="evidence" value="ECO:0000314"/>
    <property type="project" value="MGI"/>
</dbReference>
<dbReference type="GO" id="GO:0046850">
    <property type="term" value="P:regulation of bone remodeling"/>
    <property type="evidence" value="ECO:0000266"/>
    <property type="project" value="MGI"/>
</dbReference>
<dbReference type="GO" id="GO:0010468">
    <property type="term" value="P:regulation of gene expression"/>
    <property type="evidence" value="ECO:0000315"/>
    <property type="project" value="MGI"/>
</dbReference>
<dbReference type="CDD" id="cd00054">
    <property type="entry name" value="EGF_CA"/>
    <property type="match status" value="4"/>
</dbReference>
<dbReference type="FunFam" id="2.10.25.10:FF:000018">
    <property type="entry name" value="Delta-like 1"/>
    <property type="match status" value="1"/>
</dbReference>
<dbReference type="FunFam" id="2.10.25.10:FF:000321">
    <property type="entry name" value="Protein delta homolog 1"/>
    <property type="match status" value="1"/>
</dbReference>
<dbReference type="FunFam" id="2.10.25.10:FF:000486">
    <property type="entry name" value="Protein delta homolog 1"/>
    <property type="match status" value="1"/>
</dbReference>
<dbReference type="FunFam" id="2.10.25.10:FF:000551">
    <property type="entry name" value="Protein delta homolog 1"/>
    <property type="match status" value="1"/>
</dbReference>
<dbReference type="FunFam" id="2.10.25.10:FF:000118">
    <property type="entry name" value="protein delta homolog 2"/>
    <property type="match status" value="1"/>
</dbReference>
<dbReference type="Gene3D" id="2.10.25.10">
    <property type="entry name" value="Laminin"/>
    <property type="match status" value="6"/>
</dbReference>
<dbReference type="InterPro" id="IPR001881">
    <property type="entry name" value="EGF-like_Ca-bd_dom"/>
</dbReference>
<dbReference type="InterPro" id="IPR000742">
    <property type="entry name" value="EGF-like_dom"/>
</dbReference>
<dbReference type="InterPro" id="IPR000152">
    <property type="entry name" value="EGF-type_Asp/Asn_hydroxyl_site"/>
</dbReference>
<dbReference type="InterPro" id="IPR051022">
    <property type="entry name" value="Notch_Cell-Fate_Det"/>
</dbReference>
<dbReference type="PANTHER" id="PTHR24049">
    <property type="entry name" value="CRUMBS FAMILY MEMBER"/>
    <property type="match status" value="1"/>
</dbReference>
<dbReference type="PANTHER" id="PTHR24049:SF42">
    <property type="entry name" value="DELTA LIKE NON-CANONICAL NOTCH LIGAND 1"/>
    <property type="match status" value="1"/>
</dbReference>
<dbReference type="Pfam" id="PF00008">
    <property type="entry name" value="EGF"/>
    <property type="match status" value="4"/>
</dbReference>
<dbReference type="Pfam" id="PF21700">
    <property type="entry name" value="EGF_DL_JAG"/>
    <property type="match status" value="1"/>
</dbReference>
<dbReference type="PRINTS" id="PR00010">
    <property type="entry name" value="EGFBLOOD"/>
</dbReference>
<dbReference type="SMART" id="SM00181">
    <property type="entry name" value="EGF"/>
    <property type="match status" value="6"/>
</dbReference>
<dbReference type="SMART" id="SM00179">
    <property type="entry name" value="EGF_CA"/>
    <property type="match status" value="4"/>
</dbReference>
<dbReference type="SUPFAM" id="SSF57196">
    <property type="entry name" value="EGF/Laminin"/>
    <property type="match status" value="4"/>
</dbReference>
<dbReference type="PROSITE" id="PS00010">
    <property type="entry name" value="ASX_HYDROXYL"/>
    <property type="match status" value="1"/>
</dbReference>
<dbReference type="PROSITE" id="PS00022">
    <property type="entry name" value="EGF_1"/>
    <property type="match status" value="5"/>
</dbReference>
<dbReference type="PROSITE" id="PS01186">
    <property type="entry name" value="EGF_2"/>
    <property type="match status" value="6"/>
</dbReference>
<dbReference type="PROSITE" id="PS50026">
    <property type="entry name" value="EGF_3"/>
    <property type="match status" value="6"/>
</dbReference>
<protein>
    <recommendedName>
        <fullName>Protein delta homolog 1</fullName>
        <shortName>DLK-1</shortName>
    </recommendedName>
    <alternativeName>
        <fullName>Adipocyte differentiation inhibitor protein</fullName>
    </alternativeName>
    <alternativeName>
        <fullName>Preadipocyte factor 1</fullName>
        <shortName>Pref-1</shortName>
    </alternativeName>
    <component>
        <recommendedName>
            <fullName>Fetal antigen 1</fullName>
            <shortName>FA1</shortName>
        </recommendedName>
    </component>
</protein>
<accession>Q09163</accession>
<accession>Q07645</accession>
<accession>Q62208</accession>
<comment type="function">
    <text evidence="6 7">May have a role in neuroendocrine differentiation. Inhibits adipocyte differentiation.</text>
</comment>
<comment type="subunit">
    <text evidence="1">Monomer. Interacts with SH3RF2 (By similarity).</text>
</comment>
<comment type="subcellular location">
    <subcellularLocation>
        <location>Membrane</location>
        <topology>Single-pass type I membrane protein</topology>
    </subcellularLocation>
    <subcellularLocation>
        <location evidence="1">Cytoplasm</location>
    </subcellularLocation>
</comment>
<comment type="alternative products">
    <event type="alternative splicing"/>
    <isoform>
        <id>Q09163-1</id>
        <name>A</name>
        <sequence type="displayed"/>
    </isoform>
    <isoform>
        <id>Q09163-2</id>
        <name>B</name>
        <sequence type="described" ref="VSP_001380"/>
    </isoform>
    <isoform>
        <id>Q09163-3</id>
        <name>C</name>
        <sequence type="described" ref="VSP_001381"/>
    </isoform>
    <isoform>
        <id>Q09163-4</id>
        <name>C2</name>
        <sequence type="described" ref="VSP_001382"/>
    </isoform>
    <isoform>
        <id>Q09163-5</id>
        <name>D</name>
        <sequence type="described" ref="VSP_001378"/>
    </isoform>
    <isoform>
        <id>Q09163-6</id>
        <name>D2</name>
        <sequence type="described" ref="VSP_001379"/>
    </isoform>
    <text>Additional isoforms seem to exist.</text>
</comment>
<comment type="tissue specificity">
    <text evidence="4">Highly expressed in fetal liver, placenta, adult adrenal gland, brain, testis and ovary and, to a lesser degree, in adult kidney, muscle, thymus and heart.</text>
</comment>
<comment type="developmental stage">
    <text evidence="4">Expression is elevated in liver after birth but starts to decline around postnatal day 16.</text>
</comment>
<comment type="PTM">
    <text evidence="8">N- and O-glycosylated.</text>
</comment>
<proteinExistence type="evidence at protein level"/>
<feature type="signal peptide" evidence="2">
    <location>
        <begin position="1"/>
        <end position="23"/>
    </location>
</feature>
<feature type="chain" id="PRO_0000007520" description="Protein delta homolog 1">
    <location>
        <begin position="24"/>
        <end position="385"/>
    </location>
</feature>
<feature type="chain" id="PRO_0000007521" description="Fetal antigen 1">
    <location>
        <begin position="24"/>
        <end position="305"/>
    </location>
</feature>
<feature type="topological domain" description="Extracellular" evidence="2">
    <location>
        <begin position="24"/>
        <end position="305"/>
    </location>
</feature>
<feature type="transmembrane region" description="Helical" evidence="2">
    <location>
        <begin position="306"/>
        <end position="329"/>
    </location>
</feature>
<feature type="topological domain" description="Cytoplasmic" evidence="2">
    <location>
        <begin position="330"/>
        <end position="385"/>
    </location>
</feature>
<feature type="domain" description="EGF-like 1" evidence="3">
    <location>
        <begin position="24"/>
        <end position="55"/>
    </location>
</feature>
<feature type="domain" description="EGF-like 2" evidence="3">
    <location>
        <begin position="53"/>
        <end position="86"/>
    </location>
</feature>
<feature type="domain" description="EGF-like 3" evidence="3">
    <location>
        <begin position="88"/>
        <end position="125"/>
    </location>
</feature>
<feature type="domain" description="EGF-like 4" evidence="3">
    <location>
        <begin position="127"/>
        <end position="168"/>
    </location>
</feature>
<feature type="domain" description="EGF-like 5" evidence="3">
    <location>
        <begin position="172"/>
        <end position="208"/>
    </location>
</feature>
<feature type="domain" description="EGF-like 6" evidence="3">
    <location>
        <begin position="210"/>
        <end position="247"/>
    </location>
</feature>
<feature type="glycosylation site" id="CAR_000160" description="O-linked (GalNAc...) serine" evidence="8">
    <location>
        <position position="94"/>
    </location>
</feature>
<feature type="glycosylation site" id="CAR_000183" description="N-linked (GlcNAc...) asparagine" evidence="8">
    <location>
        <position position="100"/>
    </location>
</feature>
<feature type="glycosylation site" description="N-linked (GlcNAc...) asparagine; atypical; partial" evidence="8">
    <location>
        <position position="165"/>
    </location>
</feature>
<feature type="glycosylation site" description="N-linked (GlcNAc...) asparagine; atypical" evidence="8">
    <location>
        <position position="174"/>
    </location>
</feature>
<feature type="glycosylation site" id="CAR_000161" description="O-linked (GalNAc...) serine" evidence="8">
    <location>
        <position position="216"/>
    </location>
</feature>
<feature type="glycosylation site" id="CAR_000162" description="O-linked (GalNAc...) threonine" evidence="8">
    <location>
        <position position="224"/>
    </location>
</feature>
<feature type="glycosylation site" description="O-linked (GalNAc...) threonine" evidence="8">
    <location>
        <position position="258"/>
    </location>
</feature>
<feature type="glycosylation site" description="O-linked (GalNAc...) threonine; partial" evidence="8">
    <location>
        <position position="267"/>
    </location>
</feature>
<feature type="glycosylation site" description="O-linked (GalNAc...) threonine" evidence="8">
    <location>
        <position position="271"/>
    </location>
</feature>
<feature type="glycosylation site" description="N-linked (GlcNAc...) asparagine" evidence="2">
    <location>
        <position position="295"/>
    </location>
</feature>
<feature type="disulfide bond" evidence="3">
    <location>
        <begin position="26"/>
        <end position="37"/>
    </location>
</feature>
<feature type="disulfide bond" evidence="3">
    <location>
        <begin position="30"/>
        <end position="43"/>
    </location>
</feature>
<feature type="disulfide bond" evidence="3">
    <location>
        <begin position="45"/>
        <end position="54"/>
    </location>
</feature>
<feature type="disulfide bond" evidence="3">
    <location>
        <begin position="57"/>
        <end position="68"/>
    </location>
</feature>
<feature type="disulfide bond" evidence="3">
    <location>
        <begin position="63"/>
        <end position="74"/>
    </location>
</feature>
<feature type="disulfide bond" evidence="3">
    <location>
        <begin position="76"/>
        <end position="85"/>
    </location>
</feature>
<feature type="disulfide bond" evidence="3">
    <location>
        <begin position="92"/>
        <end position="103"/>
    </location>
</feature>
<feature type="disulfide bond" evidence="3">
    <location>
        <begin position="97"/>
        <end position="113"/>
    </location>
</feature>
<feature type="disulfide bond" evidence="3">
    <location>
        <begin position="115"/>
        <end position="124"/>
    </location>
</feature>
<feature type="disulfide bond" evidence="3">
    <location>
        <begin position="131"/>
        <end position="144"/>
    </location>
</feature>
<feature type="disulfide bond" evidence="3">
    <location>
        <begin position="138"/>
        <end position="156"/>
    </location>
</feature>
<feature type="disulfide bond" evidence="3">
    <location>
        <begin position="158"/>
        <end position="167"/>
    </location>
</feature>
<feature type="disulfide bond" evidence="3">
    <location>
        <begin position="176"/>
        <end position="187"/>
    </location>
</feature>
<feature type="disulfide bond" evidence="3">
    <location>
        <begin position="181"/>
        <end position="196"/>
    </location>
</feature>
<feature type="disulfide bond" evidence="3">
    <location>
        <begin position="198"/>
        <end position="207"/>
    </location>
</feature>
<feature type="disulfide bond" evidence="3">
    <location>
        <begin position="214"/>
        <end position="225"/>
    </location>
</feature>
<feature type="disulfide bond" evidence="3">
    <location>
        <begin position="219"/>
        <end position="235"/>
    </location>
</feature>
<feature type="disulfide bond" evidence="3">
    <location>
        <begin position="237"/>
        <end position="246"/>
    </location>
</feature>
<feature type="splice variant" id="VSP_001379" description="In isoform D2." evidence="9">
    <location>
        <begin position="211"/>
        <end position="305"/>
    </location>
</feature>
<feature type="splice variant" id="VSP_001378" description="In isoform D." evidence="9">
    <location>
        <begin position="211"/>
        <end position="303"/>
    </location>
</feature>
<feature type="splice variant" id="VSP_001382" description="In isoform C2." evidence="9">
    <location>
        <begin position="231"/>
        <end position="305"/>
    </location>
</feature>
<feature type="splice variant" id="VSP_001381" description="In isoform C." evidence="9">
    <location>
        <begin position="231"/>
        <end position="303"/>
    </location>
</feature>
<feature type="splice variant" id="VSP_001380" description="In isoform B." evidence="9">
    <location>
        <begin position="231"/>
        <end position="281"/>
    </location>
</feature>
<feature type="sequence variant" evidence="5">
    <location>
        <position position="347"/>
    </location>
</feature>
<feature type="sequence conflict" description="In Ref. 2; AAA37175." evidence="9" ref="2">
    <original>R</original>
    <variation>P</variation>
    <location>
        <position position="250"/>
    </location>
</feature>
<feature type="sequence conflict" description="In Ref. 2; AAA37175." evidence="9" ref="2">
    <original>VLGTVAIVFLNKCETWVSNLRYNHTFRKKKNLLLQYNSGEELAVNIIFPEKIDMTTFNKEAGDEEI</original>
    <variation>CWAPWPSSFSTSAKPGCPTCATTTCFARRRTSCCSITAARSWRSISSSPRRLT</variation>
    <location>
        <begin position="320"/>
        <end position="385"/>
    </location>
</feature>
<feature type="sequence conflict" description="In Ref. 4; BAA04121." evidence="9" ref="4">
    <original>TF</original>
    <variation>ML</variation>
    <location>
        <begin position="344"/>
        <end position="345"/>
    </location>
</feature>
<reference key="1">
    <citation type="journal article" date="1993" name="J. Biol. Chem.">
        <title>dlk, a putative mammalian homeotic gene differentially expressed in small cell lung carcinoma and neuroendocrine tumor cell line.</title>
        <authorList>
            <person name="Laborda J."/>
            <person name="Sausville E.A."/>
            <person name="Hoffman T."/>
            <person name="Notario V."/>
        </authorList>
    </citation>
    <scope>NUCLEOTIDE SEQUENCE [MRNA]</scope>
    <scope>FUNCTION</scope>
    <source>
        <strain>SWR/J</strain>
        <tissue>Fibroblast</tissue>
    </source>
</reference>
<reference key="2">
    <citation type="journal article" date="1993" name="Cell">
        <title>Pref-1, a protein containing EGF-like repeats, inhibits adipocyte differentiation.</title>
        <authorList>
            <person name="Smas C.M."/>
            <person name="Sul H.S."/>
        </authorList>
    </citation>
    <scope>NUCLEOTIDE SEQUENCE [MRNA]</scope>
    <scope>FUNCTION</scope>
</reference>
<reference key="3">
    <citation type="journal article" date="1995" name="Biochim. Biophys. Acta">
        <title>dlk, pG2 and Pref-1 mRNAs encode similar proteins belonging to the EGF-like superfamily. Identification of polymorphic variants of this RNA.</title>
        <authorList>
            <person name="Lee Y.L."/>
            <person name="Helman L."/>
            <person name="Hoffman T."/>
            <person name="Laborda J."/>
        </authorList>
    </citation>
    <scope>NUCLEOTIDE SEQUENCE [MRNA]</scope>
    <scope>VARIANT LYS-347 DEL</scope>
    <source>
        <tissue>Adrenal gland</tissue>
        <tissue>Placenta</tissue>
    </source>
</reference>
<reference key="4">
    <citation type="submission" date="1993-08" db="EMBL/GenBank/DDBJ databases">
        <authorList>
            <person name="Maruyama K."/>
            <person name="Nishijima S."/>
            <person name="Kuromitsu S."/>
            <person name="Ichikawa A."/>
            <person name="Masuda E."/>
            <person name="Takemoto T."/>
            <person name="Kodama H."/>
            <person name="Kawashima H."/>
        </authorList>
    </citation>
    <scope>NUCLEOTIDE SEQUENCE [MRNA]</scope>
</reference>
<reference key="5">
    <citation type="journal article" date="1994" name="Biochemistry">
        <title>Structural characterization and alternate splicing of the gene encoding the preadipocyte EGF-like protein pref-1.</title>
        <authorList>
            <person name="Smas C.M."/>
            <person name="Green D."/>
            <person name="Sul H.S."/>
        </authorList>
    </citation>
    <scope>NUCLEOTIDE SEQUENCE [GENOMIC DNA] OF 1-8</scope>
    <scope>ALTERNATIVE SPLICING</scope>
</reference>
<reference key="6">
    <citation type="journal article" date="1997" name="Eur. J. Biochem.">
        <title>Glycosylation analysis and protein structure determination of murine fetal antigen 1 (mFA1) -- the circulating gene product of the delta-like protein (dlk), preadipocyte factor 1 (Pref-1) and stromal-cell-derived protein 1 (SCP-1) cDNAs.</title>
        <authorList>
            <person name="Krogh T.N."/>
            <person name="Bachmann E."/>
            <person name="Teisner B."/>
            <person name="Skjoedt K."/>
            <person name="Hoejrup P."/>
        </authorList>
    </citation>
    <scope>GLYCOSYLATION AT SER-94; ASN-100; ASN-165; ASN-174; SER-216; THR-224; THR-258; THR-267 AND THR-271</scope>
    <scope>STRUCTURE OF CARBOHYDRATE</scope>
</reference>
<reference key="7">
    <citation type="journal article" date="2007" name="J. Mol. Biol.">
        <title>The novel gene EGFL9/Dlk2, highly homologous to Dlk1, functions as a modulator of adipogenesis.</title>
        <authorList>
            <person name="Nueda M.L."/>
            <person name="Baladron V."/>
            <person name="Garcia-Ramirez J.J."/>
            <person name="Sanchez-Solana B."/>
            <person name="Ruvira M.D."/>
            <person name="Rivero S."/>
            <person name="Ballesteros M.A."/>
            <person name="Monsalve E.M."/>
            <person name="Diaz-Guerra M.J."/>
            <person name="Ruiz-Hidalgo M.J."/>
            <person name="Laborda J."/>
        </authorList>
    </citation>
    <scope>TISSUE SPECIFICITY</scope>
    <scope>DEVELOPMENTAL STAGE</scope>
</reference>
<name>DLK1_MOUSE</name>
<sequence length="385" mass="41320">MIATGALLRVLLLLLAFGHSTYGAECDPPCDPQYGFCEADNVCRCHVGWEGPLCDKCVTAPGCVNGVCKEPWQCICKDGWDGKFCEIDVRACTSTPCANNGTCVDLEKGQYECSCTPGFSGKDCQHKAGPCVINGSPCQHGGACVDDEGQASHASCLCPPGFSGNFCEIVAATNSCTPNPCENDGVCTDIGGDFRCRCPAGFVDKTCSRPVSNCASGPCQNGGTCLQHTQVSFECLCKPPFMGPTCAKKRGASPVQVTHLPSGYGLTYRLTPGVHELPVQQPEQHILKVSMKELNKSTPLLTEGQAICFTILGVLTSLVVLGTVAIVFLNKCETWVSNLRYNHTFRKKKNLLLQYNSGEELAVNIIFPEKIDMTTFNKEAGDEEI</sequence>
<evidence type="ECO:0000250" key="1">
    <source>
        <dbReference type="UniProtKB" id="O70534"/>
    </source>
</evidence>
<evidence type="ECO:0000255" key="2"/>
<evidence type="ECO:0000255" key="3">
    <source>
        <dbReference type="PROSITE-ProRule" id="PRU00076"/>
    </source>
</evidence>
<evidence type="ECO:0000269" key="4">
    <source>
    </source>
</evidence>
<evidence type="ECO:0000269" key="5">
    <source>
    </source>
</evidence>
<evidence type="ECO:0000269" key="6">
    <source>
    </source>
</evidence>
<evidence type="ECO:0000269" key="7">
    <source>
    </source>
</evidence>
<evidence type="ECO:0000269" key="8">
    <source>
    </source>
</evidence>
<evidence type="ECO:0000305" key="9"/>
<organism>
    <name type="scientific">Mus musculus</name>
    <name type="common">Mouse</name>
    <dbReference type="NCBI Taxonomy" id="10090"/>
    <lineage>
        <taxon>Eukaryota</taxon>
        <taxon>Metazoa</taxon>
        <taxon>Chordata</taxon>
        <taxon>Craniata</taxon>
        <taxon>Vertebrata</taxon>
        <taxon>Euteleostomi</taxon>
        <taxon>Mammalia</taxon>
        <taxon>Eutheria</taxon>
        <taxon>Euarchontoglires</taxon>
        <taxon>Glires</taxon>
        <taxon>Rodentia</taxon>
        <taxon>Myomorpha</taxon>
        <taxon>Muroidea</taxon>
        <taxon>Muridae</taxon>
        <taxon>Murinae</taxon>
        <taxon>Mus</taxon>
        <taxon>Mus</taxon>
    </lineage>
</organism>
<gene>
    <name type="primary">Dlk1</name>
    <name type="synonym">Dlk</name>
    <name type="synonym">Pref1</name>
    <name type="synonym">Scp-1</name>
</gene>
<keyword id="KW-0025">Alternative splicing</keyword>
<keyword id="KW-0963">Cytoplasm</keyword>
<keyword id="KW-1015">Disulfide bond</keyword>
<keyword id="KW-0245">EGF-like domain</keyword>
<keyword id="KW-0325">Glycoprotein</keyword>
<keyword id="KW-0472">Membrane</keyword>
<keyword id="KW-1185">Reference proteome</keyword>
<keyword id="KW-0677">Repeat</keyword>
<keyword id="KW-0732">Signal</keyword>
<keyword id="KW-0812">Transmembrane</keyword>
<keyword id="KW-1133">Transmembrane helix</keyword>